<reference key="1">
    <citation type="journal article" date="1994" name="Genomics">
        <title>Chromosomal localization and cDNA cloning of the human DBP and TEF genes.</title>
        <authorList>
            <person name="Khatib Z.A."/>
            <person name="Inaba T."/>
            <person name="Valentine M."/>
            <person name="Look A.T."/>
        </authorList>
    </citation>
    <scope>NUCLEOTIDE SEQUENCE [MRNA]</scope>
</reference>
<reference key="2">
    <citation type="journal article" date="1996" name="Genomics">
        <title>Genomic structure of the human D-site binding protein (DBP) gene.</title>
        <authorList>
            <person name="Shutler G."/>
            <person name="Glassco T."/>
            <person name="Kang X."/>
            <person name="Korneluk R."/>
            <person name="Mueller C.R."/>
        </authorList>
    </citation>
    <scope>NUCLEOTIDE SEQUENCE [GENOMIC DNA]</scope>
</reference>
<reference key="3">
    <citation type="submission" date="2006-09" db="EMBL/GenBank/DDBJ databases">
        <authorList>
            <consortium name="NHLBI resequencing and genotyping service (RS&amp;G)"/>
        </authorList>
    </citation>
    <scope>NUCLEOTIDE SEQUENCE [GENOMIC DNA]</scope>
</reference>
<reference key="4">
    <citation type="journal article" date="1997" name="Genome Res.">
        <title>Large-scale concatenation cDNA sequencing.</title>
        <authorList>
            <person name="Yu W."/>
            <person name="Andersson B."/>
            <person name="Worley K.C."/>
            <person name="Muzny D.M."/>
            <person name="Ding Y."/>
            <person name="Liu W."/>
            <person name="Ricafrente J.Y."/>
            <person name="Wentland M.A."/>
            <person name="Lennon G."/>
            <person name="Gibbs R.A."/>
        </authorList>
    </citation>
    <scope>NUCLEOTIDE SEQUENCE [LARGE SCALE MRNA]</scope>
    <source>
        <tissue>Brain</tissue>
    </source>
</reference>
<reference key="5">
    <citation type="submission" date="2003-05" db="EMBL/GenBank/DDBJ databases">
        <title>Cloning of human full-length CDSs in BD Creator(TM) system donor vector.</title>
        <authorList>
            <person name="Kalnine N."/>
            <person name="Chen X."/>
            <person name="Rolfs A."/>
            <person name="Halleck A."/>
            <person name="Hines L."/>
            <person name="Eisenstein S."/>
            <person name="Koundinya M."/>
            <person name="Raphael J."/>
            <person name="Moreira D."/>
            <person name="Kelley T."/>
            <person name="LaBaer J."/>
            <person name="Lin Y."/>
            <person name="Phelan M."/>
            <person name="Farmer A."/>
        </authorList>
    </citation>
    <scope>NUCLEOTIDE SEQUENCE [LARGE SCALE MRNA]</scope>
</reference>
<reference key="6">
    <citation type="submission" date="2005-07" db="EMBL/GenBank/DDBJ databases">
        <authorList>
            <person name="Mural R.J."/>
            <person name="Istrail S."/>
            <person name="Sutton G.G."/>
            <person name="Florea L."/>
            <person name="Halpern A.L."/>
            <person name="Mobarry C.M."/>
            <person name="Lippert R."/>
            <person name="Walenz B."/>
            <person name="Shatkay H."/>
            <person name="Dew I."/>
            <person name="Miller J.R."/>
            <person name="Flanigan M.J."/>
            <person name="Edwards N.J."/>
            <person name="Bolanos R."/>
            <person name="Fasulo D."/>
            <person name="Halldorsson B.V."/>
            <person name="Hannenhalli S."/>
            <person name="Turner R."/>
            <person name="Yooseph S."/>
            <person name="Lu F."/>
            <person name="Nusskern D.R."/>
            <person name="Shue B.C."/>
            <person name="Zheng X.H."/>
            <person name="Zhong F."/>
            <person name="Delcher A.L."/>
            <person name="Huson D.H."/>
            <person name="Kravitz S.A."/>
            <person name="Mouchard L."/>
            <person name="Reinert K."/>
            <person name="Remington K.A."/>
            <person name="Clark A.G."/>
            <person name="Waterman M.S."/>
            <person name="Eichler E.E."/>
            <person name="Adams M.D."/>
            <person name="Hunkapiller M.W."/>
            <person name="Myers E.W."/>
            <person name="Venter J.C."/>
        </authorList>
    </citation>
    <scope>NUCLEOTIDE SEQUENCE [LARGE SCALE GENOMIC DNA]</scope>
</reference>
<reference key="7">
    <citation type="journal article" date="2004" name="Genome Res.">
        <title>The status, quality, and expansion of the NIH full-length cDNA project: the Mammalian Gene Collection (MGC).</title>
        <authorList>
            <consortium name="The MGC Project Team"/>
        </authorList>
    </citation>
    <scope>NUCLEOTIDE SEQUENCE [LARGE SCALE MRNA]</scope>
    <source>
        <tissue>Ovary</tissue>
    </source>
</reference>
<reference key="8">
    <citation type="journal article" date="1993" name="Gene">
        <title>Cloning of a cDNA encoding a DNA-binding protein TAXREB302 that is specific for the tax-responsive enhancer of HTLV-I.</title>
        <authorList>
            <person name="Nyunoya H."/>
            <person name="Morita T."/>
            <person name="Sato T."/>
            <person name="Honma S."/>
            <person name="Tsujimoto A."/>
            <person name="Shimotohno K."/>
        </authorList>
    </citation>
    <scope>NUCLEOTIDE SEQUENCE [MRNA] OF 132-325</scope>
</reference>
<reference key="9">
    <citation type="submission" date="1994-03" db="EMBL/GenBank/DDBJ databases">
        <authorList>
            <person name="Nyunoya H."/>
        </authorList>
    </citation>
    <scope>SEQUENCE REVISION</scope>
</reference>
<reference key="10">
    <citation type="journal article" date="1999" name="Curr. Opin. Genet. Dev.">
        <title>The ins and outs of circadian timekeeping.</title>
        <authorList>
            <person name="Brown S.A."/>
            <person name="Schibler U."/>
        </authorList>
    </citation>
    <scope>REVIEW</scope>
</reference>
<reference key="11">
    <citation type="journal article" date="2010" name="Sci. Signal.">
        <title>Quantitative phosphoproteomics reveals widespread full phosphorylation site occupancy during mitosis.</title>
        <authorList>
            <person name="Olsen J.V."/>
            <person name="Vermeulen M."/>
            <person name="Santamaria A."/>
            <person name="Kumar C."/>
            <person name="Miller M.L."/>
            <person name="Jensen L.J."/>
            <person name="Gnad F."/>
            <person name="Cox J."/>
            <person name="Jensen T.S."/>
            <person name="Nigg E.A."/>
            <person name="Brunak S."/>
            <person name="Mann M."/>
        </authorList>
    </citation>
    <scope>PHOSPHORYLATION [LARGE SCALE ANALYSIS] AT SER-86</scope>
    <scope>IDENTIFICATION BY MASS SPECTROMETRY [LARGE SCALE ANALYSIS]</scope>
    <source>
        <tissue>Cervix carcinoma</tissue>
    </source>
</reference>
<reference key="12">
    <citation type="journal article" date="2014" name="J. Proteomics">
        <title>An enzyme assisted RP-RPLC approach for in-depth analysis of human liver phosphoproteome.</title>
        <authorList>
            <person name="Bian Y."/>
            <person name="Song C."/>
            <person name="Cheng K."/>
            <person name="Dong M."/>
            <person name="Wang F."/>
            <person name="Huang J."/>
            <person name="Sun D."/>
            <person name="Wang L."/>
            <person name="Ye M."/>
            <person name="Zou H."/>
        </authorList>
    </citation>
    <scope>PHOSPHORYLATION [LARGE SCALE ANALYSIS] AT SER-86</scope>
    <scope>IDENTIFICATION BY MASS SPECTROMETRY [LARGE SCALE ANALYSIS]</scope>
    <source>
        <tissue>Liver</tissue>
    </source>
</reference>
<gene>
    <name type="primary">DBP</name>
</gene>
<proteinExistence type="evidence at protein level"/>
<sequence length="325" mass="34349">MARPVSDRTPAPLLLGGPAGTPPGGGALLGLRSLLQGTSKPKEPASCLLKEKERKAALPAATTPGPGLETAGPADAPAGAVVGGGSPRGRPGPVPAPGLLAPLLWERTLPFGDVEYVDLDAFLLEHGLPPSPPPPGGPSPEPSPARTPAPSPGPGSCGSASPRSSPGHAPARAALGTASGHRAGLTSRDTPSPVDPDTVEVLMTFEPDPADLALSSIPGHETFDPRRHRFSEEELKPQPIMKKARKIQVPEEQKDEKYWSRRYKNNEAAKRSRDARRLKENQISVRAAFLEKENALLRQEVVAVRQELSHYRAVLSRYQAQHGAL</sequence>
<dbReference type="EMBL" id="U06936">
    <property type="protein sequence ID" value="AAA81374.1"/>
    <property type="molecule type" value="mRNA"/>
</dbReference>
<dbReference type="EMBL" id="U48213">
    <property type="protein sequence ID" value="AAB18668.1"/>
    <property type="molecule type" value="Genomic_DNA"/>
</dbReference>
<dbReference type="EMBL" id="U48212">
    <property type="protein sequence ID" value="AAB18668.1"/>
    <property type="status" value="JOINED"/>
    <property type="molecule type" value="Genomic_DNA"/>
</dbReference>
<dbReference type="EMBL" id="EF015902">
    <property type="protein sequence ID" value="ABM64213.1"/>
    <property type="molecule type" value="Genomic_DNA"/>
</dbReference>
<dbReference type="EMBL" id="U79283">
    <property type="protein sequence ID" value="AAB50219.1"/>
    <property type="molecule type" value="mRNA"/>
</dbReference>
<dbReference type="EMBL" id="BT006836">
    <property type="protein sequence ID" value="AAP35482.1"/>
    <property type="molecule type" value="mRNA"/>
</dbReference>
<dbReference type="EMBL" id="CH471177">
    <property type="protein sequence ID" value="EAW52374.1"/>
    <property type="molecule type" value="Genomic_DNA"/>
</dbReference>
<dbReference type="EMBL" id="BC011965">
    <property type="protein sequence ID" value="AAH11965.1"/>
    <property type="molecule type" value="mRNA"/>
</dbReference>
<dbReference type="EMBL" id="D28468">
    <property type="protein sequence ID" value="BAA05833.1"/>
    <property type="molecule type" value="mRNA"/>
</dbReference>
<dbReference type="CCDS" id="CCDS12728.1"/>
<dbReference type="PIR" id="A55558">
    <property type="entry name" value="A55558"/>
</dbReference>
<dbReference type="RefSeq" id="NP_001343.2">
    <property type="nucleotide sequence ID" value="NM_001352.4"/>
</dbReference>
<dbReference type="SMR" id="Q10586"/>
<dbReference type="BioGRID" id="107996">
    <property type="interactions" value="13"/>
</dbReference>
<dbReference type="ComplexPortal" id="CPX-7014">
    <property type="entry name" value="bZIP transcription factor complex, BATF-DBP"/>
</dbReference>
<dbReference type="ComplexPortal" id="CPX-7068">
    <property type="entry name" value="bZIP transcription factor complex, BATF2-DBP"/>
</dbReference>
<dbReference type="ComplexPortal" id="CPX-7108">
    <property type="entry name" value="bZIP transcription factor complex, BATF3-DBP"/>
</dbReference>
<dbReference type="FunCoup" id="Q10586">
    <property type="interactions" value="260"/>
</dbReference>
<dbReference type="IntAct" id="Q10586">
    <property type="interactions" value="9"/>
</dbReference>
<dbReference type="STRING" id="9606.ENSP00000222122"/>
<dbReference type="iPTMnet" id="Q10586"/>
<dbReference type="PhosphoSitePlus" id="Q10586"/>
<dbReference type="BioMuta" id="DBP"/>
<dbReference type="DMDM" id="1706312"/>
<dbReference type="jPOST" id="Q10586"/>
<dbReference type="MassIVE" id="Q10586"/>
<dbReference type="PaxDb" id="9606-ENSP00000222122"/>
<dbReference type="PeptideAtlas" id="Q10586"/>
<dbReference type="ProteomicsDB" id="58862"/>
<dbReference type="Antibodypedia" id="18372">
    <property type="antibodies" value="123 antibodies from 22 providers"/>
</dbReference>
<dbReference type="DNASU" id="1628"/>
<dbReference type="Ensembl" id="ENST00000222122.10">
    <property type="protein sequence ID" value="ENSP00000222122.4"/>
    <property type="gene ID" value="ENSG00000105516.11"/>
</dbReference>
<dbReference type="GeneID" id="1628"/>
<dbReference type="KEGG" id="hsa:1628"/>
<dbReference type="MANE-Select" id="ENST00000222122.10">
    <property type="protein sequence ID" value="ENSP00000222122.4"/>
    <property type="RefSeq nucleotide sequence ID" value="NM_001352.5"/>
    <property type="RefSeq protein sequence ID" value="NP_001343.2"/>
</dbReference>
<dbReference type="UCSC" id="uc002pjx.5">
    <property type="organism name" value="human"/>
</dbReference>
<dbReference type="AGR" id="HGNC:2697"/>
<dbReference type="CTD" id="1628"/>
<dbReference type="DisGeNET" id="1628"/>
<dbReference type="GeneCards" id="DBP"/>
<dbReference type="HGNC" id="HGNC:2697">
    <property type="gene designation" value="DBP"/>
</dbReference>
<dbReference type="HPA" id="ENSG00000105516">
    <property type="expression patterns" value="Low tissue specificity"/>
</dbReference>
<dbReference type="MIM" id="124097">
    <property type="type" value="gene"/>
</dbReference>
<dbReference type="neXtProt" id="NX_Q10586"/>
<dbReference type="OpenTargets" id="ENSG00000105516"/>
<dbReference type="PharmGKB" id="PA27165"/>
<dbReference type="VEuPathDB" id="HostDB:ENSG00000105516"/>
<dbReference type="eggNOG" id="KOG3119">
    <property type="taxonomic scope" value="Eukaryota"/>
</dbReference>
<dbReference type="GeneTree" id="ENSGT00940000162136"/>
<dbReference type="HOGENOM" id="CLU_051922_0_0_1"/>
<dbReference type="InParanoid" id="Q10586"/>
<dbReference type="OMA" id="EYEHPSS"/>
<dbReference type="OrthoDB" id="6022300at2759"/>
<dbReference type="PAN-GO" id="Q10586">
    <property type="GO annotations" value="4 GO annotations based on evolutionary models"/>
</dbReference>
<dbReference type="PhylomeDB" id="Q10586"/>
<dbReference type="TreeFam" id="TF315869"/>
<dbReference type="PathwayCommons" id="Q10586"/>
<dbReference type="Reactome" id="R-HSA-1368108">
    <property type="pathway name" value="BMAL1:CLOCK,NPAS2 activates circadian gene expression"/>
</dbReference>
<dbReference type="SignaLink" id="Q10586"/>
<dbReference type="SIGNOR" id="Q10586"/>
<dbReference type="BioGRID-ORCS" id="1628">
    <property type="hits" value="19 hits in 1189 CRISPR screens"/>
</dbReference>
<dbReference type="ChiTaRS" id="DBP">
    <property type="organism name" value="human"/>
</dbReference>
<dbReference type="GeneWiki" id="DBP_(gene)"/>
<dbReference type="GenomeRNAi" id="1628"/>
<dbReference type="Pharos" id="Q10586">
    <property type="development level" value="Tbio"/>
</dbReference>
<dbReference type="PRO" id="PR:Q10586"/>
<dbReference type="Proteomes" id="UP000005640">
    <property type="component" value="Chromosome 19"/>
</dbReference>
<dbReference type="RNAct" id="Q10586">
    <property type="molecule type" value="protein"/>
</dbReference>
<dbReference type="Bgee" id="ENSG00000105516">
    <property type="expression patterns" value="Expressed in right hemisphere of cerebellum and 179 other cell types or tissues"/>
</dbReference>
<dbReference type="ExpressionAtlas" id="Q10586">
    <property type="expression patterns" value="baseline and differential"/>
</dbReference>
<dbReference type="GO" id="GO:0000785">
    <property type="term" value="C:chromatin"/>
    <property type="evidence" value="ECO:0000247"/>
    <property type="project" value="NTNU_SB"/>
</dbReference>
<dbReference type="GO" id="GO:0005634">
    <property type="term" value="C:nucleus"/>
    <property type="evidence" value="ECO:0000318"/>
    <property type="project" value="GO_Central"/>
</dbReference>
<dbReference type="GO" id="GO:0090575">
    <property type="term" value="C:RNA polymerase II transcription regulator complex"/>
    <property type="evidence" value="ECO:0000353"/>
    <property type="project" value="ComplexPortal"/>
</dbReference>
<dbReference type="GO" id="GO:0001228">
    <property type="term" value="F:DNA-binding transcription activator activity, RNA polymerase II-specific"/>
    <property type="evidence" value="ECO:0000314"/>
    <property type="project" value="BHF-UCL"/>
</dbReference>
<dbReference type="GO" id="GO:0000981">
    <property type="term" value="F:DNA-binding transcription factor activity, RNA polymerase II-specific"/>
    <property type="evidence" value="ECO:0000247"/>
    <property type="project" value="NTNU_SB"/>
</dbReference>
<dbReference type="GO" id="GO:0000978">
    <property type="term" value="F:RNA polymerase II cis-regulatory region sequence-specific DNA binding"/>
    <property type="evidence" value="ECO:0000318"/>
    <property type="project" value="GO_Central"/>
</dbReference>
<dbReference type="GO" id="GO:0000977">
    <property type="term" value="F:RNA polymerase II transcription regulatory region sequence-specific DNA binding"/>
    <property type="evidence" value="ECO:0000314"/>
    <property type="project" value="BHF-UCL"/>
</dbReference>
<dbReference type="GO" id="GO:1990837">
    <property type="term" value="F:sequence-specific double-stranded DNA binding"/>
    <property type="evidence" value="ECO:0000314"/>
    <property type="project" value="ARUK-UCL"/>
</dbReference>
<dbReference type="GO" id="GO:0001889">
    <property type="term" value="P:liver development"/>
    <property type="evidence" value="ECO:0007669"/>
    <property type="project" value="Ensembl"/>
</dbReference>
<dbReference type="GO" id="GO:0045944">
    <property type="term" value="P:positive regulation of transcription by RNA polymerase II"/>
    <property type="evidence" value="ECO:0000314"/>
    <property type="project" value="BHF-UCL"/>
</dbReference>
<dbReference type="GO" id="GO:0006357">
    <property type="term" value="P:regulation of transcription by RNA polymerase II"/>
    <property type="evidence" value="ECO:0000318"/>
    <property type="project" value="GO_Central"/>
</dbReference>
<dbReference type="GO" id="GO:0048511">
    <property type="term" value="P:rhythmic process"/>
    <property type="evidence" value="ECO:0007669"/>
    <property type="project" value="UniProtKB-KW"/>
</dbReference>
<dbReference type="CDD" id="cd14695">
    <property type="entry name" value="bZIP_HLF"/>
    <property type="match status" value="1"/>
</dbReference>
<dbReference type="FunFam" id="1.20.5.170:FF:000007">
    <property type="entry name" value="hepatic leukemia factor isoform X2"/>
    <property type="match status" value="1"/>
</dbReference>
<dbReference type="Gene3D" id="1.20.5.170">
    <property type="match status" value="1"/>
</dbReference>
<dbReference type="InterPro" id="IPR004827">
    <property type="entry name" value="bZIP"/>
</dbReference>
<dbReference type="InterPro" id="IPR046347">
    <property type="entry name" value="bZIP_sf"/>
</dbReference>
<dbReference type="InterPro" id="IPR040223">
    <property type="entry name" value="PAR_bZIP"/>
</dbReference>
<dbReference type="PANTHER" id="PTHR11988:SF7">
    <property type="entry name" value="D SITE-BINDING PROTEIN"/>
    <property type="match status" value="1"/>
</dbReference>
<dbReference type="PANTHER" id="PTHR11988">
    <property type="entry name" value="THYROTROPH EMBRYONIC FACTOR RELATED"/>
    <property type="match status" value="1"/>
</dbReference>
<dbReference type="Pfam" id="PF07716">
    <property type="entry name" value="bZIP_2"/>
    <property type="match status" value="1"/>
</dbReference>
<dbReference type="SMART" id="SM00338">
    <property type="entry name" value="BRLZ"/>
    <property type="match status" value="1"/>
</dbReference>
<dbReference type="SUPFAM" id="SSF57959">
    <property type="entry name" value="Leucine zipper domain"/>
    <property type="match status" value="1"/>
</dbReference>
<dbReference type="PROSITE" id="PS50217">
    <property type="entry name" value="BZIP"/>
    <property type="match status" value="1"/>
</dbReference>
<protein>
    <recommendedName>
        <fullName>D site-binding protein</fullName>
    </recommendedName>
    <alternativeName>
        <fullName>Albumin D box-binding protein</fullName>
    </alternativeName>
    <alternativeName>
        <fullName>Albumin D-element-binding protein</fullName>
    </alternativeName>
    <alternativeName>
        <fullName>Tax-responsive enhancer element-binding protein 302</fullName>
        <shortName>TaxREB302</shortName>
    </alternativeName>
</protein>
<accession>Q10586</accession>
<accession>A2I2P4</accession>
<feature type="chain" id="PRO_0000076507" description="D site-binding protein">
    <location>
        <begin position="1"/>
        <end position="325"/>
    </location>
</feature>
<feature type="domain" description="bZIP" evidence="1">
    <location>
        <begin position="255"/>
        <end position="318"/>
    </location>
</feature>
<feature type="region of interest" description="Disordered" evidence="2">
    <location>
        <begin position="1"/>
        <end position="99"/>
    </location>
</feature>
<feature type="region of interest" description="Disordered" evidence="2">
    <location>
        <begin position="127"/>
        <end position="200"/>
    </location>
</feature>
<feature type="region of interest" description="Disordered" evidence="2">
    <location>
        <begin position="229"/>
        <end position="255"/>
    </location>
</feature>
<feature type="region of interest" description="Basic motif" evidence="1">
    <location>
        <begin position="257"/>
        <end position="279"/>
    </location>
</feature>
<feature type="region of interest" description="Leucine-zipper" evidence="1">
    <location>
        <begin position="283"/>
        <end position="297"/>
    </location>
</feature>
<feature type="compositionally biased region" description="Gly residues" evidence="2">
    <location>
        <begin position="17"/>
        <end position="28"/>
    </location>
</feature>
<feature type="compositionally biased region" description="Low complexity" evidence="2">
    <location>
        <begin position="29"/>
        <end position="38"/>
    </location>
</feature>
<feature type="compositionally biased region" description="Low complexity" evidence="2">
    <location>
        <begin position="57"/>
        <end position="80"/>
    </location>
</feature>
<feature type="compositionally biased region" description="Pro residues" evidence="2">
    <location>
        <begin position="129"/>
        <end position="153"/>
    </location>
</feature>
<feature type="compositionally biased region" description="Low complexity" evidence="2">
    <location>
        <begin position="157"/>
        <end position="167"/>
    </location>
</feature>
<feature type="modified residue" description="Phosphoserine" evidence="4 5">
    <location>
        <position position="86"/>
    </location>
</feature>
<feature type="sequence conflict" description="In Ref. 1; AAA81374." evidence="3" ref="1">
    <original>S</original>
    <variation>T</variation>
    <location>
        <position position="179"/>
    </location>
</feature>
<feature type="sequence conflict" description="In Ref. 8; BAA05833." evidence="3" ref="8">
    <original>R</original>
    <variation>K</variation>
    <location>
        <position position="245"/>
    </location>
</feature>
<keyword id="KW-0010">Activator</keyword>
<keyword id="KW-0090">Biological rhythms</keyword>
<keyword id="KW-0238">DNA-binding</keyword>
<keyword id="KW-0539">Nucleus</keyword>
<keyword id="KW-0597">Phosphoprotein</keyword>
<keyword id="KW-1267">Proteomics identification</keyword>
<keyword id="KW-1185">Reference proteome</keyword>
<keyword id="KW-0804">Transcription</keyword>
<keyword id="KW-0805">Transcription regulation</keyword>
<evidence type="ECO:0000255" key="1">
    <source>
        <dbReference type="PROSITE-ProRule" id="PRU00978"/>
    </source>
</evidence>
<evidence type="ECO:0000256" key="2">
    <source>
        <dbReference type="SAM" id="MobiDB-lite"/>
    </source>
</evidence>
<evidence type="ECO:0000305" key="3"/>
<evidence type="ECO:0007744" key="4">
    <source>
    </source>
</evidence>
<evidence type="ECO:0007744" key="5">
    <source>
    </source>
</evidence>
<name>DBP_HUMAN</name>
<comment type="function">
    <text>This transcriptional activator recognizes and binds to the sequence 5'-RTTAYGTAAY-3' found in the promoter of genes such as albumin, CYP2A4 and CYP2A5. It is not essential for circadian rhythm generation, but modulates important clock output genes. May be a direct target for regulation by the circadian pacemaker component clock. May affect circadian period and sleep regulation.</text>
</comment>
<comment type="subunit">
    <text>Binds DNA as a homodimer or a heterodimer. Can form a heterodimer with TEF.</text>
</comment>
<comment type="interaction">
    <interactant intactId="EBI-3908088">
        <id>Q10586</id>
    </interactant>
    <interactant intactId="EBI-749503">
        <id>Q16520</id>
        <label>BATF</label>
    </interactant>
    <organismsDiffer>false</organismsDiffer>
    <experiments>2</experiments>
</comment>
<comment type="interaction">
    <interactant intactId="EBI-3908088">
        <id>Q10586</id>
    </interactant>
    <interactant intactId="EBI-10312707">
        <id>Q9NR55</id>
        <label>BATF3</label>
    </interactant>
    <organismsDiffer>false</organismsDiffer>
    <experiments>2</experiments>
</comment>
<comment type="interaction">
    <interactant intactId="EBI-3908088">
        <id>Q10586</id>
    </interactant>
    <interactant intactId="EBI-742651">
        <id>P35638</id>
        <label>DDIT3</label>
    </interactant>
    <organismsDiffer>false</organismsDiffer>
    <experiments>4</experiments>
</comment>
<comment type="interaction">
    <interactant intactId="EBI-3908088">
        <id>Q10586</id>
    </interactant>
    <interactant intactId="EBI-2798854">
        <id>Q16534</id>
        <label>HLF</label>
    </interactant>
    <organismsDiffer>false</organismsDiffer>
    <experiments>3</experiments>
</comment>
<comment type="subcellular location">
    <subcellularLocation>
        <location>Nucleus</location>
    </subcellularLocation>
</comment>
<comment type="tissue specificity">
    <text>Ubiquitously expressed. Expressed in the suprachiasmatic nuclei (SCN) and in most peripheral tissues, with a strong circadian rhythmicity.</text>
</comment>
<comment type="similarity">
    <text evidence="3">Belongs to the bZIP family. PAR subfamily.</text>
</comment>
<organism>
    <name type="scientific">Homo sapiens</name>
    <name type="common">Human</name>
    <dbReference type="NCBI Taxonomy" id="9606"/>
    <lineage>
        <taxon>Eukaryota</taxon>
        <taxon>Metazoa</taxon>
        <taxon>Chordata</taxon>
        <taxon>Craniata</taxon>
        <taxon>Vertebrata</taxon>
        <taxon>Euteleostomi</taxon>
        <taxon>Mammalia</taxon>
        <taxon>Eutheria</taxon>
        <taxon>Euarchontoglires</taxon>
        <taxon>Primates</taxon>
        <taxon>Haplorrhini</taxon>
        <taxon>Catarrhini</taxon>
        <taxon>Hominidae</taxon>
        <taxon>Homo</taxon>
    </lineage>
</organism>